<sequence>MSTQGFLKPRSIEVEPVGPNHAKIVMEPFERGYGHTLGNALRRILLSSMTGYAPTEVQMTGVVHEYSTIPGVREDVVDILLNLKGVVFKLHNRDEVTLILRKNGSGLVLASDIELPHDVEIVNPEHPICNLTDAGKLEMQIKVEKGRGYVPGNVRALSEDRTHTIGRIILDASFSPVRRVSYAVESARVEQRTDLDKLVLDIETNGVISPEEAVRQSARILMDQISVFAALEGAGDSYEAPVRGTPQIDPVLLRPVDDLELTVRSANCLKAENIYYIGDLIQRTENELLKTPNLGRKSLNEIKEVLAARGLTLGMKLENWPPLGLERP</sequence>
<accession>Q2L238</accession>
<feature type="chain" id="PRO_0000264484" description="DNA-directed RNA polymerase subunit alpha">
    <location>
        <begin position="1"/>
        <end position="328"/>
    </location>
</feature>
<feature type="region of interest" description="Alpha N-terminal domain (alpha-NTD)" evidence="1">
    <location>
        <begin position="1"/>
        <end position="232"/>
    </location>
</feature>
<feature type="region of interest" description="Alpha C-terminal domain (alpha-CTD)" evidence="1">
    <location>
        <begin position="248"/>
        <end position="328"/>
    </location>
</feature>
<comment type="function">
    <text evidence="1">DNA-dependent RNA polymerase catalyzes the transcription of DNA into RNA using the four ribonucleoside triphosphates as substrates.</text>
</comment>
<comment type="catalytic activity">
    <reaction evidence="1">
        <text>RNA(n) + a ribonucleoside 5'-triphosphate = RNA(n+1) + diphosphate</text>
        <dbReference type="Rhea" id="RHEA:21248"/>
        <dbReference type="Rhea" id="RHEA-COMP:14527"/>
        <dbReference type="Rhea" id="RHEA-COMP:17342"/>
        <dbReference type="ChEBI" id="CHEBI:33019"/>
        <dbReference type="ChEBI" id="CHEBI:61557"/>
        <dbReference type="ChEBI" id="CHEBI:140395"/>
        <dbReference type="EC" id="2.7.7.6"/>
    </reaction>
</comment>
<comment type="subunit">
    <text evidence="1">Homodimer. The RNAP catalytic core consists of 2 alpha, 1 beta, 1 beta' and 1 omega subunit. When a sigma factor is associated with the core the holoenzyme is formed, which can initiate transcription.</text>
</comment>
<comment type="domain">
    <text evidence="1">The N-terminal domain is essential for RNAP assembly and basal transcription, whereas the C-terminal domain is involved in interaction with transcriptional regulators and with upstream promoter elements.</text>
</comment>
<comment type="similarity">
    <text evidence="1">Belongs to the RNA polymerase alpha chain family.</text>
</comment>
<name>RPOA_BORA1</name>
<gene>
    <name evidence="1" type="primary">rpoA</name>
    <name type="ordered locus">BAV0060</name>
</gene>
<keyword id="KW-0240">DNA-directed RNA polymerase</keyword>
<keyword id="KW-0548">Nucleotidyltransferase</keyword>
<keyword id="KW-1185">Reference proteome</keyword>
<keyword id="KW-0804">Transcription</keyword>
<keyword id="KW-0808">Transferase</keyword>
<protein>
    <recommendedName>
        <fullName evidence="1">DNA-directed RNA polymerase subunit alpha</fullName>
        <shortName evidence="1">RNAP subunit alpha</shortName>
        <ecNumber evidence="1">2.7.7.6</ecNumber>
    </recommendedName>
    <alternativeName>
        <fullName evidence="1">RNA polymerase subunit alpha</fullName>
    </alternativeName>
    <alternativeName>
        <fullName evidence="1">Transcriptase subunit alpha</fullName>
    </alternativeName>
</protein>
<proteinExistence type="inferred from homology"/>
<organism>
    <name type="scientific">Bordetella avium (strain 197N)</name>
    <dbReference type="NCBI Taxonomy" id="360910"/>
    <lineage>
        <taxon>Bacteria</taxon>
        <taxon>Pseudomonadati</taxon>
        <taxon>Pseudomonadota</taxon>
        <taxon>Betaproteobacteria</taxon>
        <taxon>Burkholderiales</taxon>
        <taxon>Alcaligenaceae</taxon>
        <taxon>Bordetella</taxon>
    </lineage>
</organism>
<reference key="1">
    <citation type="journal article" date="2006" name="J. Bacteriol.">
        <title>Comparison of the genome sequence of the poultry pathogen Bordetella avium with those of B. bronchiseptica, B. pertussis, and B. parapertussis reveals extensive diversity in surface structures associated with host interaction.</title>
        <authorList>
            <person name="Sebaihia M."/>
            <person name="Preston A."/>
            <person name="Maskell D.J."/>
            <person name="Kuzmiak H."/>
            <person name="Connell T.D."/>
            <person name="King N.D."/>
            <person name="Orndorff P.E."/>
            <person name="Miyamoto D.M."/>
            <person name="Thomson N.R."/>
            <person name="Harris D."/>
            <person name="Goble A."/>
            <person name="Lord A."/>
            <person name="Murphy L."/>
            <person name="Quail M.A."/>
            <person name="Rutter S."/>
            <person name="Squares R."/>
            <person name="Squares S."/>
            <person name="Woodward J."/>
            <person name="Parkhill J."/>
            <person name="Temple L.M."/>
        </authorList>
    </citation>
    <scope>NUCLEOTIDE SEQUENCE [LARGE SCALE GENOMIC DNA]</scope>
    <source>
        <strain>197N</strain>
    </source>
</reference>
<dbReference type="EC" id="2.7.7.6" evidence="1"/>
<dbReference type="EMBL" id="AM167904">
    <property type="protein sequence ID" value="CAJ47644.1"/>
    <property type="molecule type" value="Genomic_DNA"/>
</dbReference>
<dbReference type="RefSeq" id="WP_012415763.1">
    <property type="nucleotide sequence ID" value="NC_010645.1"/>
</dbReference>
<dbReference type="SMR" id="Q2L238"/>
<dbReference type="STRING" id="360910.BAV0060"/>
<dbReference type="GeneID" id="92936695"/>
<dbReference type="KEGG" id="bav:BAV0060"/>
<dbReference type="eggNOG" id="COG0202">
    <property type="taxonomic scope" value="Bacteria"/>
</dbReference>
<dbReference type="HOGENOM" id="CLU_053084_0_1_4"/>
<dbReference type="OrthoDB" id="9805706at2"/>
<dbReference type="Proteomes" id="UP000001977">
    <property type="component" value="Chromosome"/>
</dbReference>
<dbReference type="GO" id="GO:0005737">
    <property type="term" value="C:cytoplasm"/>
    <property type="evidence" value="ECO:0007669"/>
    <property type="project" value="UniProtKB-ARBA"/>
</dbReference>
<dbReference type="GO" id="GO:0000428">
    <property type="term" value="C:DNA-directed RNA polymerase complex"/>
    <property type="evidence" value="ECO:0007669"/>
    <property type="project" value="UniProtKB-KW"/>
</dbReference>
<dbReference type="GO" id="GO:0003677">
    <property type="term" value="F:DNA binding"/>
    <property type="evidence" value="ECO:0007669"/>
    <property type="project" value="UniProtKB-UniRule"/>
</dbReference>
<dbReference type="GO" id="GO:0003899">
    <property type="term" value="F:DNA-directed RNA polymerase activity"/>
    <property type="evidence" value="ECO:0007669"/>
    <property type="project" value="UniProtKB-UniRule"/>
</dbReference>
<dbReference type="GO" id="GO:0046983">
    <property type="term" value="F:protein dimerization activity"/>
    <property type="evidence" value="ECO:0007669"/>
    <property type="project" value="InterPro"/>
</dbReference>
<dbReference type="GO" id="GO:0006351">
    <property type="term" value="P:DNA-templated transcription"/>
    <property type="evidence" value="ECO:0007669"/>
    <property type="project" value="UniProtKB-UniRule"/>
</dbReference>
<dbReference type="CDD" id="cd06928">
    <property type="entry name" value="RNAP_alpha_NTD"/>
    <property type="match status" value="1"/>
</dbReference>
<dbReference type="FunFam" id="1.10.150.20:FF:000001">
    <property type="entry name" value="DNA-directed RNA polymerase subunit alpha"/>
    <property type="match status" value="1"/>
</dbReference>
<dbReference type="FunFam" id="2.170.120.12:FF:000001">
    <property type="entry name" value="DNA-directed RNA polymerase subunit alpha"/>
    <property type="match status" value="1"/>
</dbReference>
<dbReference type="Gene3D" id="1.10.150.20">
    <property type="entry name" value="5' to 3' exonuclease, C-terminal subdomain"/>
    <property type="match status" value="1"/>
</dbReference>
<dbReference type="Gene3D" id="2.170.120.12">
    <property type="entry name" value="DNA-directed RNA polymerase, insert domain"/>
    <property type="match status" value="1"/>
</dbReference>
<dbReference type="Gene3D" id="3.30.1360.10">
    <property type="entry name" value="RNA polymerase, RBP11-like subunit"/>
    <property type="match status" value="1"/>
</dbReference>
<dbReference type="HAMAP" id="MF_00059">
    <property type="entry name" value="RNApol_bact_RpoA"/>
    <property type="match status" value="1"/>
</dbReference>
<dbReference type="InterPro" id="IPR011262">
    <property type="entry name" value="DNA-dir_RNA_pol_insert"/>
</dbReference>
<dbReference type="InterPro" id="IPR011263">
    <property type="entry name" value="DNA-dir_RNA_pol_RpoA/D/Rpb3"/>
</dbReference>
<dbReference type="InterPro" id="IPR011773">
    <property type="entry name" value="DNA-dir_RpoA"/>
</dbReference>
<dbReference type="InterPro" id="IPR036603">
    <property type="entry name" value="RBP11-like"/>
</dbReference>
<dbReference type="InterPro" id="IPR011260">
    <property type="entry name" value="RNAP_asu_C"/>
</dbReference>
<dbReference type="InterPro" id="IPR036643">
    <property type="entry name" value="RNApol_insert_sf"/>
</dbReference>
<dbReference type="NCBIfam" id="NF003513">
    <property type="entry name" value="PRK05182.1-2"/>
    <property type="match status" value="1"/>
</dbReference>
<dbReference type="NCBIfam" id="NF003519">
    <property type="entry name" value="PRK05182.2-5"/>
    <property type="match status" value="1"/>
</dbReference>
<dbReference type="NCBIfam" id="TIGR02027">
    <property type="entry name" value="rpoA"/>
    <property type="match status" value="1"/>
</dbReference>
<dbReference type="Pfam" id="PF01000">
    <property type="entry name" value="RNA_pol_A_bac"/>
    <property type="match status" value="1"/>
</dbReference>
<dbReference type="Pfam" id="PF03118">
    <property type="entry name" value="RNA_pol_A_CTD"/>
    <property type="match status" value="1"/>
</dbReference>
<dbReference type="Pfam" id="PF01193">
    <property type="entry name" value="RNA_pol_L"/>
    <property type="match status" value="1"/>
</dbReference>
<dbReference type="SMART" id="SM00662">
    <property type="entry name" value="RPOLD"/>
    <property type="match status" value="1"/>
</dbReference>
<dbReference type="SUPFAM" id="SSF47789">
    <property type="entry name" value="C-terminal domain of RNA polymerase alpha subunit"/>
    <property type="match status" value="1"/>
</dbReference>
<dbReference type="SUPFAM" id="SSF56553">
    <property type="entry name" value="Insert subdomain of RNA polymerase alpha subunit"/>
    <property type="match status" value="1"/>
</dbReference>
<dbReference type="SUPFAM" id="SSF55257">
    <property type="entry name" value="RBP11-like subunits of RNA polymerase"/>
    <property type="match status" value="1"/>
</dbReference>
<evidence type="ECO:0000255" key="1">
    <source>
        <dbReference type="HAMAP-Rule" id="MF_00059"/>
    </source>
</evidence>